<sequence>MKLRPLHDRVVIRRSEEETKTAGGIVLPGSAAEKPNRGEVVAVGTGRVLDNGEVRALAVKVGDKVVFGPYSGSNAIKVDGEELLVMGESEILAVLED</sequence>
<name>CH10_PSEAB</name>
<protein>
    <recommendedName>
        <fullName evidence="1">Co-chaperonin GroES</fullName>
    </recommendedName>
    <alternativeName>
        <fullName evidence="1">10 kDa chaperonin</fullName>
    </alternativeName>
    <alternativeName>
        <fullName evidence="1">Chaperonin-10</fullName>
        <shortName evidence="1">Cpn10</shortName>
    </alternativeName>
</protein>
<proteinExistence type="inferred from homology"/>
<keyword id="KW-0143">Chaperone</keyword>
<keyword id="KW-0963">Cytoplasm</keyword>
<reference key="1">
    <citation type="journal article" date="2006" name="Genome Biol.">
        <title>Genomic analysis reveals that Pseudomonas aeruginosa virulence is combinatorial.</title>
        <authorList>
            <person name="Lee D.G."/>
            <person name="Urbach J.M."/>
            <person name="Wu G."/>
            <person name="Liberati N.T."/>
            <person name="Feinbaum R.L."/>
            <person name="Miyata S."/>
            <person name="Diggins L.T."/>
            <person name="He J."/>
            <person name="Saucier M."/>
            <person name="Deziel E."/>
            <person name="Friedman L."/>
            <person name="Li L."/>
            <person name="Grills G."/>
            <person name="Montgomery K."/>
            <person name="Kucherlapati R."/>
            <person name="Rahme L.G."/>
            <person name="Ausubel F.M."/>
        </authorList>
    </citation>
    <scope>NUCLEOTIDE SEQUENCE [LARGE SCALE GENOMIC DNA]</scope>
    <source>
        <strain>UCBPP-PA14</strain>
    </source>
</reference>
<accession>Q02H54</accession>
<gene>
    <name evidence="1" type="primary">groES</name>
    <name evidence="1" type="synonym">groS</name>
    <name type="ordered locus">PA14_57020</name>
</gene>
<feature type="chain" id="PRO_1000025334" description="Co-chaperonin GroES">
    <location>
        <begin position="1"/>
        <end position="97"/>
    </location>
</feature>
<dbReference type="EMBL" id="CP000438">
    <property type="protein sequence ID" value="ABJ13657.1"/>
    <property type="molecule type" value="Genomic_DNA"/>
</dbReference>
<dbReference type="RefSeq" id="WP_003094064.1">
    <property type="nucleotide sequence ID" value="NZ_CP034244.1"/>
</dbReference>
<dbReference type="SMR" id="Q02H54"/>
<dbReference type="KEGG" id="pau:PA14_57020"/>
<dbReference type="PseudoCAP" id="PA14_57020"/>
<dbReference type="HOGENOM" id="CLU_132825_2_0_6"/>
<dbReference type="BioCyc" id="PAER208963:G1G74-4802-MONOMER"/>
<dbReference type="Proteomes" id="UP000000653">
    <property type="component" value="Chromosome"/>
</dbReference>
<dbReference type="GO" id="GO:0005737">
    <property type="term" value="C:cytoplasm"/>
    <property type="evidence" value="ECO:0007669"/>
    <property type="project" value="UniProtKB-SubCell"/>
</dbReference>
<dbReference type="GO" id="GO:0005524">
    <property type="term" value="F:ATP binding"/>
    <property type="evidence" value="ECO:0007669"/>
    <property type="project" value="InterPro"/>
</dbReference>
<dbReference type="GO" id="GO:0046872">
    <property type="term" value="F:metal ion binding"/>
    <property type="evidence" value="ECO:0007669"/>
    <property type="project" value="TreeGrafter"/>
</dbReference>
<dbReference type="GO" id="GO:0044183">
    <property type="term" value="F:protein folding chaperone"/>
    <property type="evidence" value="ECO:0007669"/>
    <property type="project" value="InterPro"/>
</dbReference>
<dbReference type="GO" id="GO:0051087">
    <property type="term" value="F:protein-folding chaperone binding"/>
    <property type="evidence" value="ECO:0007669"/>
    <property type="project" value="TreeGrafter"/>
</dbReference>
<dbReference type="GO" id="GO:0051082">
    <property type="term" value="F:unfolded protein binding"/>
    <property type="evidence" value="ECO:0007669"/>
    <property type="project" value="TreeGrafter"/>
</dbReference>
<dbReference type="GO" id="GO:0051085">
    <property type="term" value="P:chaperone cofactor-dependent protein refolding"/>
    <property type="evidence" value="ECO:0007669"/>
    <property type="project" value="TreeGrafter"/>
</dbReference>
<dbReference type="CDD" id="cd00320">
    <property type="entry name" value="cpn10"/>
    <property type="match status" value="1"/>
</dbReference>
<dbReference type="FunFam" id="2.30.33.40:FF:000001">
    <property type="entry name" value="10 kDa chaperonin"/>
    <property type="match status" value="1"/>
</dbReference>
<dbReference type="Gene3D" id="2.30.33.40">
    <property type="entry name" value="GroES chaperonin"/>
    <property type="match status" value="1"/>
</dbReference>
<dbReference type="HAMAP" id="MF_00580">
    <property type="entry name" value="CH10"/>
    <property type="match status" value="1"/>
</dbReference>
<dbReference type="InterPro" id="IPR020818">
    <property type="entry name" value="Chaperonin_GroES"/>
</dbReference>
<dbReference type="InterPro" id="IPR037124">
    <property type="entry name" value="Chaperonin_GroES_sf"/>
</dbReference>
<dbReference type="InterPro" id="IPR018369">
    <property type="entry name" value="Chaprnonin_Cpn10_CS"/>
</dbReference>
<dbReference type="InterPro" id="IPR011032">
    <property type="entry name" value="GroES-like_sf"/>
</dbReference>
<dbReference type="NCBIfam" id="NF001526">
    <property type="entry name" value="PRK00364.1-1"/>
    <property type="match status" value="1"/>
</dbReference>
<dbReference type="NCBIfam" id="NF001527">
    <property type="entry name" value="PRK00364.1-2"/>
    <property type="match status" value="1"/>
</dbReference>
<dbReference type="NCBIfam" id="NF001531">
    <property type="entry name" value="PRK00364.2-2"/>
    <property type="match status" value="1"/>
</dbReference>
<dbReference type="NCBIfam" id="NF001533">
    <property type="entry name" value="PRK00364.2-4"/>
    <property type="match status" value="1"/>
</dbReference>
<dbReference type="PANTHER" id="PTHR10772">
    <property type="entry name" value="10 KDA HEAT SHOCK PROTEIN"/>
    <property type="match status" value="1"/>
</dbReference>
<dbReference type="PANTHER" id="PTHR10772:SF58">
    <property type="entry name" value="CO-CHAPERONIN GROES"/>
    <property type="match status" value="1"/>
</dbReference>
<dbReference type="Pfam" id="PF00166">
    <property type="entry name" value="Cpn10"/>
    <property type="match status" value="1"/>
</dbReference>
<dbReference type="PRINTS" id="PR00297">
    <property type="entry name" value="CHAPERONIN10"/>
</dbReference>
<dbReference type="SMART" id="SM00883">
    <property type="entry name" value="Cpn10"/>
    <property type="match status" value="1"/>
</dbReference>
<dbReference type="SUPFAM" id="SSF50129">
    <property type="entry name" value="GroES-like"/>
    <property type="match status" value="1"/>
</dbReference>
<dbReference type="PROSITE" id="PS00681">
    <property type="entry name" value="CHAPERONINS_CPN10"/>
    <property type="match status" value="1"/>
</dbReference>
<comment type="function">
    <text evidence="1">Together with the chaperonin GroEL, plays an essential role in assisting protein folding. The GroEL-GroES system forms a nano-cage that allows encapsulation of the non-native substrate proteins and provides a physical environment optimized to promote and accelerate protein folding. GroES binds to the apical surface of the GroEL ring, thereby capping the opening of the GroEL channel.</text>
</comment>
<comment type="subunit">
    <text evidence="1">Heptamer of 7 subunits arranged in a ring. Interacts with the chaperonin GroEL.</text>
</comment>
<comment type="subcellular location">
    <subcellularLocation>
        <location evidence="1">Cytoplasm</location>
    </subcellularLocation>
</comment>
<comment type="similarity">
    <text evidence="1">Belongs to the GroES chaperonin family.</text>
</comment>
<organism>
    <name type="scientific">Pseudomonas aeruginosa (strain UCBPP-PA14)</name>
    <dbReference type="NCBI Taxonomy" id="208963"/>
    <lineage>
        <taxon>Bacteria</taxon>
        <taxon>Pseudomonadati</taxon>
        <taxon>Pseudomonadota</taxon>
        <taxon>Gammaproteobacteria</taxon>
        <taxon>Pseudomonadales</taxon>
        <taxon>Pseudomonadaceae</taxon>
        <taxon>Pseudomonas</taxon>
    </lineage>
</organism>
<evidence type="ECO:0000255" key="1">
    <source>
        <dbReference type="HAMAP-Rule" id="MF_00580"/>
    </source>
</evidence>